<proteinExistence type="evidence at protein level"/>
<feature type="chain" id="PRO_0000047016" description="Zinc finger protein on ecdysone puffs">
    <location>
        <begin position="1"/>
        <end position="716"/>
    </location>
</feature>
<feature type="zinc finger region" description="C2H2-type 1" evidence="2">
    <location>
        <begin position="216"/>
        <end position="240"/>
    </location>
</feature>
<feature type="zinc finger region" description="C2H2-type 2; atypical" evidence="2">
    <location>
        <begin position="288"/>
        <end position="310"/>
    </location>
</feature>
<feature type="zinc finger region" description="C2H2-type 3" evidence="2">
    <location>
        <begin position="319"/>
        <end position="343"/>
    </location>
</feature>
<feature type="zinc finger region" description="C2H2-type 4" evidence="2">
    <location>
        <begin position="489"/>
        <end position="513"/>
    </location>
</feature>
<feature type="region of interest" description="Disordered" evidence="3">
    <location>
        <begin position="103"/>
        <end position="168"/>
    </location>
</feature>
<feature type="region of interest" description="Disordered" evidence="3">
    <location>
        <begin position="182"/>
        <end position="208"/>
    </location>
</feature>
<feature type="region of interest" description="Disordered" evidence="3">
    <location>
        <begin position="350"/>
        <end position="447"/>
    </location>
</feature>
<feature type="region of interest" description="Disordered" evidence="3">
    <location>
        <begin position="534"/>
        <end position="716"/>
    </location>
</feature>
<feature type="short sequence motif" description="Nuclear localization signal" evidence="1">
    <location>
        <begin position="379"/>
        <end position="383"/>
    </location>
</feature>
<feature type="short sequence motif" description="Nuclear localization signal" evidence="1">
    <location>
        <begin position="544"/>
        <end position="548"/>
    </location>
</feature>
<feature type="compositionally biased region" description="Basic and acidic residues" evidence="3">
    <location>
        <begin position="188"/>
        <end position="203"/>
    </location>
</feature>
<feature type="compositionally biased region" description="Basic and acidic residues" evidence="3">
    <location>
        <begin position="350"/>
        <end position="359"/>
    </location>
</feature>
<feature type="compositionally biased region" description="Basic and acidic residues" evidence="3">
    <location>
        <begin position="386"/>
        <end position="401"/>
    </location>
</feature>
<feature type="compositionally biased region" description="Acidic residues" evidence="3">
    <location>
        <begin position="405"/>
        <end position="414"/>
    </location>
</feature>
<feature type="compositionally biased region" description="Basic and acidic residues" evidence="3">
    <location>
        <begin position="415"/>
        <end position="431"/>
    </location>
</feature>
<feature type="compositionally biased region" description="Acidic residues" evidence="3">
    <location>
        <begin position="432"/>
        <end position="447"/>
    </location>
</feature>
<feature type="compositionally biased region" description="Basic and acidic residues" evidence="3">
    <location>
        <begin position="541"/>
        <end position="551"/>
    </location>
</feature>
<feature type="compositionally biased region" description="Acidic residues" evidence="3">
    <location>
        <begin position="560"/>
        <end position="638"/>
    </location>
</feature>
<feature type="compositionally biased region" description="Pro residues" evidence="3">
    <location>
        <begin position="639"/>
        <end position="656"/>
    </location>
</feature>
<feature type="compositionally biased region" description="Low complexity" evidence="3">
    <location>
        <begin position="657"/>
        <end position="704"/>
    </location>
</feature>
<feature type="compositionally biased region" description="Basic residues" evidence="3">
    <location>
        <begin position="707"/>
        <end position="716"/>
    </location>
</feature>
<feature type="modified residue" description="Phosphoserine" evidence="4">
    <location>
        <position position="201"/>
    </location>
</feature>
<feature type="modified residue" description="Phosphothreonine" evidence="4">
    <location>
        <position position="203"/>
    </location>
</feature>
<feature type="modified residue" description="Phosphoserine" evidence="4">
    <location>
        <position position="206"/>
    </location>
</feature>
<feature type="modified residue" description="Phosphoserine" evidence="4">
    <location>
        <position position="673"/>
    </location>
</feature>
<feature type="modified residue" description="Phosphoserine" evidence="4">
    <location>
        <position position="684"/>
    </location>
</feature>
<feature type="modified residue" description="Phosphoserine" evidence="4">
    <location>
        <position position="686"/>
    </location>
</feature>
<feature type="modified residue" description="Phosphothreonine" evidence="4">
    <location>
        <position position="692"/>
    </location>
</feature>
<feature type="splice variant" id="VSP_009605" description="In isoform A and isoform C." evidence="6">
    <location>
        <begin position="1"/>
        <end position="23"/>
    </location>
</feature>
<feature type="splice variant" id="VSP_037472" description="In isoform A." evidence="7">
    <original>MVSRGGGA</original>
    <variation>PYQGVSIR</variation>
    <location>
        <begin position="125"/>
        <end position="132"/>
    </location>
</feature>
<feature type="splice variant" id="VSP_037473" description="In isoform A." evidence="7">
    <location>
        <begin position="133"/>
        <end position="716"/>
    </location>
</feature>
<keyword id="KW-0025">Alternative splicing</keyword>
<keyword id="KW-0158">Chromosome</keyword>
<keyword id="KW-0238">DNA-binding</keyword>
<keyword id="KW-0479">Metal-binding</keyword>
<keyword id="KW-0539">Nucleus</keyword>
<keyword id="KW-0597">Phosphoprotein</keyword>
<keyword id="KW-1185">Reference proteome</keyword>
<keyword id="KW-0677">Repeat</keyword>
<keyword id="KW-0862">Zinc</keyword>
<keyword id="KW-0863">Zinc-finger</keyword>
<name>PEP_DROME</name>
<organism>
    <name type="scientific">Drosophila melanogaster</name>
    <name type="common">Fruit fly</name>
    <dbReference type="NCBI Taxonomy" id="7227"/>
    <lineage>
        <taxon>Eukaryota</taxon>
        <taxon>Metazoa</taxon>
        <taxon>Ecdysozoa</taxon>
        <taxon>Arthropoda</taxon>
        <taxon>Hexapoda</taxon>
        <taxon>Insecta</taxon>
        <taxon>Pterygota</taxon>
        <taxon>Neoptera</taxon>
        <taxon>Endopterygota</taxon>
        <taxon>Diptera</taxon>
        <taxon>Brachycera</taxon>
        <taxon>Muscomorpha</taxon>
        <taxon>Ephydroidea</taxon>
        <taxon>Drosophilidae</taxon>
        <taxon>Drosophila</taxon>
        <taxon>Sophophora</taxon>
    </lineage>
</organism>
<accession>P41073</accession>
<accession>Q8IGB1</accession>
<accession>Q8MSV5</accession>
<accession>Q9VVJ2</accession>
<accession>Q9VVJ3</accession>
<accession>Q9VVJ4</accession>
<gene>
    <name type="primary">Pep</name>
    <name type="ORF">CG6143</name>
</gene>
<comment type="function">
    <text evidence="5">May play a role in the process of early and late gene activation, or possibly in RNA processing, for a defined set of developmentally regulated loci.</text>
</comment>
<comment type="subcellular location">
    <subcellularLocation>
        <location evidence="5">Nucleus</location>
    </subcellularLocation>
    <subcellularLocation>
        <location evidence="5">Chromosome</location>
    </subcellularLocation>
    <text>It is associated with the active ecdysone-regulated loci on polytene chromosomes, and on some heat shock-induced puffs. Its distribution pattern follows the changes of puffing patterns in the developmental program, or following heat shock.</text>
</comment>
<comment type="alternative products">
    <event type="alternative splicing"/>
    <isoform>
        <id>P41073-1</id>
        <name>B</name>
        <sequence type="displayed"/>
    </isoform>
    <isoform>
        <id>P41073-2</id>
        <name>A</name>
        <sequence type="described" ref="VSP_009605 VSP_037472 VSP_037473"/>
    </isoform>
    <isoform>
        <id>P41073-3</id>
        <name>C</name>
        <sequence type="described" ref="VSP_009605"/>
    </isoform>
</comment>
<comment type="developmental stage">
    <text evidence="5">Expressed both maternally and zygotically, zygotic expression is at a low and constant level thereafter.</text>
</comment>
<comment type="sequence caution" evidence="7">
    <conflict type="miscellaneous discrepancy">
        <sequence resource="EMBL-CDS" id="AAN71637"/>
    </conflict>
    <text>Intron retention.</text>
</comment>
<evidence type="ECO:0000255" key="1"/>
<evidence type="ECO:0000255" key="2">
    <source>
        <dbReference type="PROSITE-ProRule" id="PRU00042"/>
    </source>
</evidence>
<evidence type="ECO:0000256" key="3">
    <source>
        <dbReference type="SAM" id="MobiDB-lite"/>
    </source>
</evidence>
<evidence type="ECO:0000269" key="4">
    <source>
    </source>
</evidence>
<evidence type="ECO:0000269" key="5">
    <source>
    </source>
</evidence>
<evidence type="ECO:0000303" key="6">
    <source>
    </source>
</evidence>
<evidence type="ECO:0000305" key="7"/>
<sequence length="716" mass="78048">MVSVKVNGNPQNRLVNNAKVNGNMAFRGNQNRNRNFGGGNNNYGGPMGANRMGGMNMSPWESQNPGGGQFGNNMRQGGGQMNAQAINLANNLLNNLFRNQNPPSLLDLPRGGGGMGNRNQRGGPMVSRGGGAGNRLNNRRGQGGGFQNRGATGSGPKPPPKQGGGGIRKQNAFDRAKKLLAKNANQNKKKEPTPGEKKIESPTKESPYASVPNDMFYCHLCKKHMWDANSFENHIKGRTHLMMREGIEESYRLKANMIRQEAKIAEQLKSIEFDRLKRMGKSKQRQLDYCTMCDLNFHGHISTHRKSEGHLQLKKFLHPKCIECNKEFATRIDYDTHLLSAEHLKKAAENNTKVGERKRQTLPISTEEEETRDLRLPQKRKKKPVKKEGEAADGEAKKEGAGDGEGAEGDEAEGEEAKEGEEAADETKEGDELNESQEEEEVALPVDPEDCILDFNDGDEIPSEVDTRLPKYNWQRAVGPGLISKLECYECSVCSKFFDTEVTAEIHSRTATHHRNFLKFINEKSSDTKIAQKRAAAALEENERKKRKVEEAEAPAAEGAAEETTEGAEGELYDPSEATGDDEDVEMVDDNAEGEGEGEGDEEAEAEVEEDGAGQDNGEEEMEAQEEEGQEGEQEPEPEPAPVQTPAPAEPAPPAKTPAKTPTKAAAPAAVASPAAAATSADASPSPAKKATPARAAAGAKATPQRQRARGRYNRY</sequence>
<reference key="1">
    <citation type="journal article" date="1991" name="Genes Dev.">
        <title>A unique zinc finger protein is associated preferentially with active ecdysone-responsive loci in Drosophila.</title>
        <authorList>
            <person name="Amero S.A."/>
            <person name="Elgin S.C.R."/>
            <person name="Beyer A.L."/>
        </authorList>
    </citation>
    <scope>NUCLEOTIDE SEQUENCE [MRNA] (ISOFORM B)</scope>
    <scope>FUNCTION</scope>
    <scope>SUBCELLULAR LOCATION</scope>
    <scope>DEVELOPMENTAL STAGE</scope>
    <source>
        <strain>Oregon-R</strain>
        <tissue>Embryo</tissue>
    </source>
</reference>
<reference key="2">
    <citation type="journal article" date="2000" name="Science">
        <title>The genome sequence of Drosophila melanogaster.</title>
        <authorList>
            <person name="Adams M.D."/>
            <person name="Celniker S.E."/>
            <person name="Holt R.A."/>
            <person name="Evans C.A."/>
            <person name="Gocayne J.D."/>
            <person name="Amanatides P.G."/>
            <person name="Scherer S.E."/>
            <person name="Li P.W."/>
            <person name="Hoskins R.A."/>
            <person name="Galle R.F."/>
            <person name="George R.A."/>
            <person name="Lewis S.E."/>
            <person name="Richards S."/>
            <person name="Ashburner M."/>
            <person name="Henderson S.N."/>
            <person name="Sutton G.G."/>
            <person name="Wortman J.R."/>
            <person name="Yandell M.D."/>
            <person name="Zhang Q."/>
            <person name="Chen L.X."/>
            <person name="Brandon R.C."/>
            <person name="Rogers Y.-H.C."/>
            <person name="Blazej R.G."/>
            <person name="Champe M."/>
            <person name="Pfeiffer B.D."/>
            <person name="Wan K.H."/>
            <person name="Doyle C."/>
            <person name="Baxter E.G."/>
            <person name="Helt G."/>
            <person name="Nelson C.R."/>
            <person name="Miklos G.L.G."/>
            <person name="Abril J.F."/>
            <person name="Agbayani A."/>
            <person name="An H.-J."/>
            <person name="Andrews-Pfannkoch C."/>
            <person name="Baldwin D."/>
            <person name="Ballew R.M."/>
            <person name="Basu A."/>
            <person name="Baxendale J."/>
            <person name="Bayraktaroglu L."/>
            <person name="Beasley E.M."/>
            <person name="Beeson K.Y."/>
            <person name="Benos P.V."/>
            <person name="Berman B.P."/>
            <person name="Bhandari D."/>
            <person name="Bolshakov S."/>
            <person name="Borkova D."/>
            <person name="Botchan M.R."/>
            <person name="Bouck J."/>
            <person name="Brokstein P."/>
            <person name="Brottier P."/>
            <person name="Burtis K.C."/>
            <person name="Busam D.A."/>
            <person name="Butler H."/>
            <person name="Cadieu E."/>
            <person name="Center A."/>
            <person name="Chandra I."/>
            <person name="Cherry J.M."/>
            <person name="Cawley S."/>
            <person name="Dahlke C."/>
            <person name="Davenport L.B."/>
            <person name="Davies P."/>
            <person name="de Pablos B."/>
            <person name="Delcher A."/>
            <person name="Deng Z."/>
            <person name="Mays A.D."/>
            <person name="Dew I."/>
            <person name="Dietz S.M."/>
            <person name="Dodson K."/>
            <person name="Doup L.E."/>
            <person name="Downes M."/>
            <person name="Dugan-Rocha S."/>
            <person name="Dunkov B.C."/>
            <person name="Dunn P."/>
            <person name="Durbin K.J."/>
            <person name="Evangelista C.C."/>
            <person name="Ferraz C."/>
            <person name="Ferriera S."/>
            <person name="Fleischmann W."/>
            <person name="Fosler C."/>
            <person name="Gabrielian A.E."/>
            <person name="Garg N.S."/>
            <person name="Gelbart W.M."/>
            <person name="Glasser K."/>
            <person name="Glodek A."/>
            <person name="Gong F."/>
            <person name="Gorrell J.H."/>
            <person name="Gu Z."/>
            <person name="Guan P."/>
            <person name="Harris M."/>
            <person name="Harris N.L."/>
            <person name="Harvey D.A."/>
            <person name="Heiman T.J."/>
            <person name="Hernandez J.R."/>
            <person name="Houck J."/>
            <person name="Hostin D."/>
            <person name="Houston K.A."/>
            <person name="Howland T.J."/>
            <person name="Wei M.-H."/>
            <person name="Ibegwam C."/>
            <person name="Jalali M."/>
            <person name="Kalush F."/>
            <person name="Karpen G.H."/>
            <person name="Ke Z."/>
            <person name="Kennison J.A."/>
            <person name="Ketchum K.A."/>
            <person name="Kimmel B.E."/>
            <person name="Kodira C.D."/>
            <person name="Kraft C.L."/>
            <person name="Kravitz S."/>
            <person name="Kulp D."/>
            <person name="Lai Z."/>
            <person name="Lasko P."/>
            <person name="Lei Y."/>
            <person name="Levitsky A.A."/>
            <person name="Li J.H."/>
            <person name="Li Z."/>
            <person name="Liang Y."/>
            <person name="Lin X."/>
            <person name="Liu X."/>
            <person name="Mattei B."/>
            <person name="McIntosh T.C."/>
            <person name="McLeod M.P."/>
            <person name="McPherson D."/>
            <person name="Merkulov G."/>
            <person name="Milshina N.V."/>
            <person name="Mobarry C."/>
            <person name="Morris J."/>
            <person name="Moshrefi A."/>
            <person name="Mount S.M."/>
            <person name="Moy M."/>
            <person name="Murphy B."/>
            <person name="Murphy L."/>
            <person name="Muzny D.M."/>
            <person name="Nelson D.L."/>
            <person name="Nelson D.R."/>
            <person name="Nelson K.A."/>
            <person name="Nixon K."/>
            <person name="Nusskern D.R."/>
            <person name="Pacleb J.M."/>
            <person name="Palazzolo M."/>
            <person name="Pittman G.S."/>
            <person name="Pan S."/>
            <person name="Pollard J."/>
            <person name="Puri V."/>
            <person name="Reese M.G."/>
            <person name="Reinert K."/>
            <person name="Remington K."/>
            <person name="Saunders R.D.C."/>
            <person name="Scheeler F."/>
            <person name="Shen H."/>
            <person name="Shue B.C."/>
            <person name="Siden-Kiamos I."/>
            <person name="Simpson M."/>
            <person name="Skupski M.P."/>
            <person name="Smith T.J."/>
            <person name="Spier E."/>
            <person name="Spradling A.C."/>
            <person name="Stapleton M."/>
            <person name="Strong R."/>
            <person name="Sun E."/>
            <person name="Svirskas R."/>
            <person name="Tector C."/>
            <person name="Turner R."/>
            <person name="Venter E."/>
            <person name="Wang A.H."/>
            <person name="Wang X."/>
            <person name="Wang Z.-Y."/>
            <person name="Wassarman D.A."/>
            <person name="Weinstock G.M."/>
            <person name="Weissenbach J."/>
            <person name="Williams S.M."/>
            <person name="Woodage T."/>
            <person name="Worley K.C."/>
            <person name="Wu D."/>
            <person name="Yang S."/>
            <person name="Yao Q.A."/>
            <person name="Ye J."/>
            <person name="Yeh R.-F."/>
            <person name="Zaveri J.S."/>
            <person name="Zhan M."/>
            <person name="Zhang G."/>
            <person name="Zhao Q."/>
            <person name="Zheng L."/>
            <person name="Zheng X.H."/>
            <person name="Zhong F.N."/>
            <person name="Zhong W."/>
            <person name="Zhou X."/>
            <person name="Zhu S.C."/>
            <person name="Zhu X."/>
            <person name="Smith H.O."/>
            <person name="Gibbs R.A."/>
            <person name="Myers E.W."/>
            <person name="Rubin G.M."/>
            <person name="Venter J.C."/>
        </authorList>
    </citation>
    <scope>NUCLEOTIDE SEQUENCE [LARGE SCALE GENOMIC DNA]</scope>
    <source>
        <strain>Berkeley</strain>
    </source>
</reference>
<reference key="3">
    <citation type="journal article" date="2002" name="Genome Biol.">
        <title>Annotation of the Drosophila melanogaster euchromatic genome: a systematic review.</title>
        <authorList>
            <person name="Misra S."/>
            <person name="Crosby M.A."/>
            <person name="Mungall C.J."/>
            <person name="Matthews B.B."/>
            <person name="Campbell K.S."/>
            <person name="Hradecky P."/>
            <person name="Huang Y."/>
            <person name="Kaminker J.S."/>
            <person name="Millburn G.H."/>
            <person name="Prochnik S.E."/>
            <person name="Smith C.D."/>
            <person name="Tupy J.L."/>
            <person name="Whitfield E.J."/>
            <person name="Bayraktaroglu L."/>
            <person name="Berman B.P."/>
            <person name="Bettencourt B.R."/>
            <person name="Celniker S.E."/>
            <person name="de Grey A.D.N.J."/>
            <person name="Drysdale R.A."/>
            <person name="Harris N.L."/>
            <person name="Richter J."/>
            <person name="Russo S."/>
            <person name="Schroeder A.J."/>
            <person name="Shu S.Q."/>
            <person name="Stapleton M."/>
            <person name="Yamada C."/>
            <person name="Ashburner M."/>
            <person name="Gelbart W.M."/>
            <person name="Rubin G.M."/>
            <person name="Lewis S.E."/>
        </authorList>
    </citation>
    <scope>GENOME REANNOTATION</scope>
    <scope>ALTERNATIVE SPLICING</scope>
    <source>
        <strain>Berkeley</strain>
    </source>
</reference>
<reference key="4">
    <citation type="journal article" date="2002" name="Genome Biol.">
        <title>A Drosophila full-length cDNA resource.</title>
        <authorList>
            <person name="Stapleton M."/>
            <person name="Carlson J.W."/>
            <person name="Brokstein P."/>
            <person name="Yu C."/>
            <person name="Champe M."/>
            <person name="George R.A."/>
            <person name="Guarin H."/>
            <person name="Kronmiller B."/>
            <person name="Pacleb J.M."/>
            <person name="Park S."/>
            <person name="Wan K.H."/>
            <person name="Rubin G.M."/>
            <person name="Celniker S.E."/>
        </authorList>
    </citation>
    <scope>NUCLEOTIDE SEQUENCE [LARGE SCALE MRNA] (ISOFORM C)</scope>
    <scope>NUCLEOTIDE SEQUENCE [LARGE SCALE MRNA] OF 202-716 (ISOFORMS B/C)</scope>
    <source>
        <strain>Berkeley</strain>
        <tissue>Embryo</tissue>
    </source>
</reference>
<reference key="5">
    <citation type="journal article" date="2008" name="J. Proteome Res.">
        <title>Phosphoproteome analysis of Drosophila melanogaster embryos.</title>
        <authorList>
            <person name="Zhai B."/>
            <person name="Villen J."/>
            <person name="Beausoleil S.A."/>
            <person name="Mintseris J."/>
            <person name="Gygi S.P."/>
        </authorList>
    </citation>
    <scope>PHOSPHORYLATION [LARGE SCALE ANALYSIS] AT SER-201; THR-203; SER-206; SER-673; SER-684; SER-686 AND THR-692</scope>
    <scope>IDENTIFICATION BY MASS SPECTROMETRY</scope>
    <source>
        <tissue>Embryo</tissue>
    </source>
</reference>
<protein>
    <recommendedName>
        <fullName>Zinc finger protein on ecdysone puffs</fullName>
    </recommendedName>
</protein>
<dbReference type="EMBL" id="X56689">
    <property type="protein sequence ID" value="CAA40017.1"/>
    <property type="molecule type" value="mRNA"/>
</dbReference>
<dbReference type="EMBL" id="AE014296">
    <property type="protein sequence ID" value="AAF49317.4"/>
    <property type="molecule type" value="Genomic_DNA"/>
</dbReference>
<dbReference type="EMBL" id="AE014296">
    <property type="protein sequence ID" value="AAF49319.3"/>
    <property type="molecule type" value="Genomic_DNA"/>
</dbReference>
<dbReference type="EMBL" id="AE014296">
    <property type="protein sequence ID" value="AAS64975.1"/>
    <property type="molecule type" value="Genomic_DNA"/>
</dbReference>
<dbReference type="EMBL" id="AY118552">
    <property type="protein sequence ID" value="AAM49921.1"/>
    <property type="molecule type" value="mRNA"/>
</dbReference>
<dbReference type="EMBL" id="BT001867">
    <property type="protein sequence ID" value="AAN71637.1"/>
    <property type="status" value="ALT_SEQ"/>
    <property type="molecule type" value="mRNA"/>
</dbReference>
<dbReference type="PIR" id="S26759">
    <property type="entry name" value="S26759"/>
</dbReference>
<dbReference type="RefSeq" id="NP_001246817.1">
    <molecule id="P41073-3"/>
    <property type="nucleotide sequence ID" value="NM_001259888.3"/>
</dbReference>
<dbReference type="RefSeq" id="NP_524858.1">
    <molecule id="P41073-1"/>
    <property type="nucleotide sequence ID" value="NM_080119.6"/>
</dbReference>
<dbReference type="RefSeq" id="NP_730290.3">
    <molecule id="P41073-2"/>
    <property type="nucleotide sequence ID" value="NM_168742.4"/>
</dbReference>
<dbReference type="RefSeq" id="NP_996118.1">
    <molecule id="P41073-3"/>
    <property type="nucleotide sequence ID" value="NM_206396.4"/>
</dbReference>
<dbReference type="BioGRID" id="70020">
    <property type="interactions" value="20"/>
</dbReference>
<dbReference type="DIP" id="DIP-20217N"/>
<dbReference type="FunCoup" id="P41073">
    <property type="interactions" value="777"/>
</dbReference>
<dbReference type="IntAct" id="P41073">
    <property type="interactions" value="38"/>
</dbReference>
<dbReference type="MINT" id="P41073"/>
<dbReference type="STRING" id="7227.FBpp0074963"/>
<dbReference type="GlyGen" id="P41073">
    <property type="glycosylation" value="1 site"/>
</dbReference>
<dbReference type="iPTMnet" id="P41073"/>
<dbReference type="PaxDb" id="7227-FBpp0074963"/>
<dbReference type="DNASU" id="45961"/>
<dbReference type="EnsemblMetazoa" id="FBtr0075198">
    <molecule id="P41073-2"/>
    <property type="protein sequence ID" value="FBpp0074962"/>
    <property type="gene ID" value="FBgn0004401"/>
</dbReference>
<dbReference type="EnsemblMetazoa" id="FBtr0075199">
    <molecule id="P41073-1"/>
    <property type="protein sequence ID" value="FBpp0074963"/>
    <property type="gene ID" value="FBgn0004401"/>
</dbReference>
<dbReference type="EnsemblMetazoa" id="FBtr0075200">
    <molecule id="P41073-3"/>
    <property type="protein sequence ID" value="FBpp0089253"/>
    <property type="gene ID" value="FBgn0004401"/>
</dbReference>
<dbReference type="EnsemblMetazoa" id="FBtr0304977">
    <molecule id="P41073-3"/>
    <property type="protein sequence ID" value="FBpp0293516"/>
    <property type="gene ID" value="FBgn0004401"/>
</dbReference>
<dbReference type="GeneID" id="45961"/>
<dbReference type="KEGG" id="dme:Dmel_CG6143"/>
<dbReference type="AGR" id="FB:FBgn0004401"/>
<dbReference type="CTD" id="45961"/>
<dbReference type="FlyBase" id="FBgn0004401">
    <property type="gene designation" value="Pep"/>
</dbReference>
<dbReference type="VEuPathDB" id="VectorBase:FBgn0004401"/>
<dbReference type="eggNOG" id="ENOG502RYYN">
    <property type="taxonomic scope" value="Eukaryota"/>
</dbReference>
<dbReference type="GeneTree" id="ENSGT00440000039084"/>
<dbReference type="InParanoid" id="P41073"/>
<dbReference type="OMA" id="KATPQRN"/>
<dbReference type="OrthoDB" id="6378952at2759"/>
<dbReference type="PhylomeDB" id="P41073"/>
<dbReference type="SignaLink" id="P41073"/>
<dbReference type="BioGRID-ORCS" id="45961">
    <property type="hits" value="1 hit in 1 CRISPR screen"/>
</dbReference>
<dbReference type="ChiTaRS" id="Pep">
    <property type="organism name" value="fly"/>
</dbReference>
<dbReference type="GenomeRNAi" id="45961"/>
<dbReference type="PRO" id="PR:P41073"/>
<dbReference type="Proteomes" id="UP000000803">
    <property type="component" value="Chromosome 3L"/>
</dbReference>
<dbReference type="Bgee" id="FBgn0004401">
    <property type="expression patterns" value="Expressed in wing disc and 276 other cell types or tissues"/>
</dbReference>
<dbReference type="ExpressionAtlas" id="P41073">
    <property type="expression patterns" value="baseline and differential"/>
</dbReference>
<dbReference type="GO" id="GO:0071013">
    <property type="term" value="C:catalytic step 2 spliceosome"/>
    <property type="evidence" value="ECO:0007005"/>
    <property type="project" value="FlyBase"/>
</dbReference>
<dbReference type="GO" id="GO:0005694">
    <property type="term" value="C:chromosome"/>
    <property type="evidence" value="ECO:0007669"/>
    <property type="project" value="UniProtKB-SubCell"/>
</dbReference>
<dbReference type="GO" id="GO:0005634">
    <property type="term" value="C:nucleus"/>
    <property type="evidence" value="ECO:0000318"/>
    <property type="project" value="GO_Central"/>
</dbReference>
<dbReference type="GO" id="GO:0071011">
    <property type="term" value="C:precatalytic spliceosome"/>
    <property type="evidence" value="ECO:0007005"/>
    <property type="project" value="FlyBase"/>
</dbReference>
<dbReference type="GO" id="GO:0003677">
    <property type="term" value="F:DNA binding"/>
    <property type="evidence" value="ECO:0000314"/>
    <property type="project" value="FlyBase"/>
</dbReference>
<dbReference type="GO" id="GO:0003697">
    <property type="term" value="F:single-stranded DNA binding"/>
    <property type="evidence" value="ECO:0000314"/>
    <property type="project" value="FlyBase"/>
</dbReference>
<dbReference type="GO" id="GO:0003727">
    <property type="term" value="F:single-stranded RNA binding"/>
    <property type="evidence" value="ECO:0000314"/>
    <property type="project" value="FlyBase"/>
</dbReference>
<dbReference type="GO" id="GO:0008270">
    <property type="term" value="F:zinc ion binding"/>
    <property type="evidence" value="ECO:0007669"/>
    <property type="project" value="UniProtKB-KW"/>
</dbReference>
<dbReference type="GO" id="GO:0000398">
    <property type="term" value="P:mRNA splicing, via spliceosome"/>
    <property type="evidence" value="ECO:0000305"/>
    <property type="project" value="FlyBase"/>
</dbReference>
<dbReference type="GO" id="GO:0048024">
    <property type="term" value="P:regulation of mRNA splicing, via spliceosome"/>
    <property type="evidence" value="ECO:0000315"/>
    <property type="project" value="FlyBase"/>
</dbReference>
<dbReference type="InterPro" id="IPR026811">
    <property type="entry name" value="CIZ1"/>
</dbReference>
<dbReference type="InterPro" id="IPR056345">
    <property type="entry name" value="Znf-C2H2_CIZ1"/>
</dbReference>
<dbReference type="InterPro" id="IPR036236">
    <property type="entry name" value="Znf_C2H2_sf"/>
</dbReference>
<dbReference type="InterPro" id="IPR013087">
    <property type="entry name" value="Znf_C2H2_type"/>
</dbReference>
<dbReference type="PANTHER" id="PTHR15491">
    <property type="match status" value="1"/>
</dbReference>
<dbReference type="PANTHER" id="PTHR15491:SF9">
    <property type="entry name" value="CIP1-INTERACTING ZINC FINGER PROTEIN"/>
    <property type="match status" value="1"/>
</dbReference>
<dbReference type="Pfam" id="PF23330">
    <property type="entry name" value="zf-C2H2_14"/>
    <property type="match status" value="1"/>
</dbReference>
<dbReference type="SMART" id="SM00355">
    <property type="entry name" value="ZnF_C2H2"/>
    <property type="match status" value="3"/>
</dbReference>
<dbReference type="SUPFAM" id="SSF57667">
    <property type="entry name" value="beta-beta-alpha zinc fingers"/>
    <property type="match status" value="3"/>
</dbReference>
<dbReference type="PROSITE" id="PS00028">
    <property type="entry name" value="ZINC_FINGER_C2H2_1"/>
    <property type="match status" value="3"/>
</dbReference>
<dbReference type="PROSITE" id="PS50157">
    <property type="entry name" value="ZINC_FINGER_C2H2_2"/>
    <property type="match status" value="1"/>
</dbReference>